<protein>
    <recommendedName>
        <fullName evidence="1">Protein-L-isoaspartate O-methyltransferase</fullName>
        <ecNumber evidence="1">2.1.1.77</ecNumber>
    </recommendedName>
    <alternativeName>
        <fullName evidence="1">L-isoaspartyl protein carboxyl methyltransferase</fullName>
    </alternativeName>
    <alternativeName>
        <fullName evidence="1">Protein L-isoaspartyl methyltransferase</fullName>
    </alternativeName>
    <alternativeName>
        <fullName evidence="1">Protein-beta-aspartate methyltransferase</fullName>
        <shortName evidence="1">PIMT</shortName>
    </alternativeName>
</protein>
<dbReference type="EC" id="2.1.1.77" evidence="1"/>
<dbReference type="EMBL" id="CP001233">
    <property type="protein sequence ID" value="ACP04815.1"/>
    <property type="molecule type" value="Genomic_DNA"/>
</dbReference>
<dbReference type="RefSeq" id="WP_000002982.1">
    <property type="nucleotide sequence ID" value="NC_012578.1"/>
</dbReference>
<dbReference type="SMR" id="C3LS22"/>
<dbReference type="KEGG" id="vcm:VCM66_0490"/>
<dbReference type="HOGENOM" id="CLU_055432_2_0_6"/>
<dbReference type="Proteomes" id="UP000001217">
    <property type="component" value="Chromosome I"/>
</dbReference>
<dbReference type="GO" id="GO:0005737">
    <property type="term" value="C:cytoplasm"/>
    <property type="evidence" value="ECO:0007669"/>
    <property type="project" value="UniProtKB-SubCell"/>
</dbReference>
<dbReference type="GO" id="GO:0004719">
    <property type="term" value="F:protein-L-isoaspartate (D-aspartate) O-methyltransferase activity"/>
    <property type="evidence" value="ECO:0007669"/>
    <property type="project" value="UniProtKB-UniRule"/>
</dbReference>
<dbReference type="GO" id="GO:0032259">
    <property type="term" value="P:methylation"/>
    <property type="evidence" value="ECO:0007669"/>
    <property type="project" value="UniProtKB-KW"/>
</dbReference>
<dbReference type="GO" id="GO:0036211">
    <property type="term" value="P:protein modification process"/>
    <property type="evidence" value="ECO:0007669"/>
    <property type="project" value="UniProtKB-UniRule"/>
</dbReference>
<dbReference type="GO" id="GO:0030091">
    <property type="term" value="P:protein repair"/>
    <property type="evidence" value="ECO:0007669"/>
    <property type="project" value="UniProtKB-UniRule"/>
</dbReference>
<dbReference type="CDD" id="cd02440">
    <property type="entry name" value="AdoMet_MTases"/>
    <property type="match status" value="1"/>
</dbReference>
<dbReference type="FunFam" id="3.40.50.150:FF:000010">
    <property type="entry name" value="Protein-L-isoaspartate O-methyltransferase"/>
    <property type="match status" value="1"/>
</dbReference>
<dbReference type="Gene3D" id="3.40.50.150">
    <property type="entry name" value="Vaccinia Virus protein VP39"/>
    <property type="match status" value="1"/>
</dbReference>
<dbReference type="HAMAP" id="MF_00090">
    <property type="entry name" value="PIMT"/>
    <property type="match status" value="1"/>
</dbReference>
<dbReference type="InterPro" id="IPR000682">
    <property type="entry name" value="PCMT"/>
</dbReference>
<dbReference type="InterPro" id="IPR029063">
    <property type="entry name" value="SAM-dependent_MTases_sf"/>
</dbReference>
<dbReference type="NCBIfam" id="TIGR00080">
    <property type="entry name" value="pimt"/>
    <property type="match status" value="1"/>
</dbReference>
<dbReference type="NCBIfam" id="NF001453">
    <property type="entry name" value="PRK00312.1"/>
    <property type="match status" value="1"/>
</dbReference>
<dbReference type="PANTHER" id="PTHR11579">
    <property type="entry name" value="PROTEIN-L-ISOASPARTATE O-METHYLTRANSFERASE"/>
    <property type="match status" value="1"/>
</dbReference>
<dbReference type="PANTHER" id="PTHR11579:SF0">
    <property type="entry name" value="PROTEIN-L-ISOASPARTATE(D-ASPARTATE) O-METHYLTRANSFERASE"/>
    <property type="match status" value="1"/>
</dbReference>
<dbReference type="Pfam" id="PF01135">
    <property type="entry name" value="PCMT"/>
    <property type="match status" value="1"/>
</dbReference>
<dbReference type="SUPFAM" id="SSF53335">
    <property type="entry name" value="S-adenosyl-L-methionine-dependent methyltransferases"/>
    <property type="match status" value="1"/>
</dbReference>
<dbReference type="PROSITE" id="PS01279">
    <property type="entry name" value="PCMT"/>
    <property type="match status" value="1"/>
</dbReference>
<organism>
    <name type="scientific">Vibrio cholerae serotype O1 (strain M66-2)</name>
    <dbReference type="NCBI Taxonomy" id="579112"/>
    <lineage>
        <taxon>Bacteria</taxon>
        <taxon>Pseudomonadati</taxon>
        <taxon>Pseudomonadota</taxon>
        <taxon>Gammaproteobacteria</taxon>
        <taxon>Vibrionales</taxon>
        <taxon>Vibrionaceae</taxon>
        <taxon>Vibrio</taxon>
    </lineage>
</organism>
<evidence type="ECO:0000255" key="1">
    <source>
        <dbReference type="HAMAP-Rule" id="MF_00090"/>
    </source>
</evidence>
<feature type="chain" id="PRO_1000192400" description="Protein-L-isoaspartate O-methyltransferase">
    <location>
        <begin position="1"/>
        <end position="208"/>
    </location>
</feature>
<feature type="active site" evidence="1">
    <location>
        <position position="59"/>
    </location>
</feature>
<sequence length="208" mass="22862">MANPKADRLIQFLTEQGITSPQVLAAIHALPREFFVAPAMMHQAYDNNALPIGQGQTISQPYIVAKMTELLALTPETKVLEIGTGSGYQTAVLAKLVNHVFTVERIKTLQWDAKRRLKQLDIYNVSTKHGDGWQGWPARGPFDAILVTAAAAKVPQSLLDQLAEGGRMVIPVGEDEQYLYKIVRQGGQFISERVEAVRFVPLVAGDLA</sequence>
<name>PIMT_VIBCM</name>
<gene>
    <name evidence="1" type="primary">pcm</name>
    <name type="ordered locus">VCM66_0490</name>
</gene>
<keyword id="KW-0963">Cytoplasm</keyword>
<keyword id="KW-0489">Methyltransferase</keyword>
<keyword id="KW-0949">S-adenosyl-L-methionine</keyword>
<keyword id="KW-0808">Transferase</keyword>
<proteinExistence type="inferred from homology"/>
<reference key="1">
    <citation type="journal article" date="2008" name="PLoS ONE">
        <title>A recalibrated molecular clock and independent origins for the cholera pandemic clones.</title>
        <authorList>
            <person name="Feng L."/>
            <person name="Reeves P.R."/>
            <person name="Lan R."/>
            <person name="Ren Y."/>
            <person name="Gao C."/>
            <person name="Zhou Z."/>
            <person name="Ren Y."/>
            <person name="Cheng J."/>
            <person name="Wang W."/>
            <person name="Wang J."/>
            <person name="Qian W."/>
            <person name="Li D."/>
            <person name="Wang L."/>
        </authorList>
    </citation>
    <scope>NUCLEOTIDE SEQUENCE [LARGE SCALE GENOMIC DNA]</scope>
    <source>
        <strain>M66-2</strain>
    </source>
</reference>
<accession>C3LS22</accession>
<comment type="function">
    <text evidence="1">Catalyzes the methyl esterification of L-isoaspartyl residues in peptides and proteins that result from spontaneous decomposition of normal L-aspartyl and L-asparaginyl residues. It plays a role in the repair and/or degradation of damaged proteins.</text>
</comment>
<comment type="catalytic activity">
    <reaction evidence="1">
        <text>[protein]-L-isoaspartate + S-adenosyl-L-methionine = [protein]-L-isoaspartate alpha-methyl ester + S-adenosyl-L-homocysteine</text>
        <dbReference type="Rhea" id="RHEA:12705"/>
        <dbReference type="Rhea" id="RHEA-COMP:12143"/>
        <dbReference type="Rhea" id="RHEA-COMP:12144"/>
        <dbReference type="ChEBI" id="CHEBI:57856"/>
        <dbReference type="ChEBI" id="CHEBI:59789"/>
        <dbReference type="ChEBI" id="CHEBI:90596"/>
        <dbReference type="ChEBI" id="CHEBI:90598"/>
        <dbReference type="EC" id="2.1.1.77"/>
    </reaction>
</comment>
<comment type="subcellular location">
    <subcellularLocation>
        <location evidence="1">Cytoplasm</location>
    </subcellularLocation>
</comment>
<comment type="similarity">
    <text evidence="1">Belongs to the methyltransferase superfamily. L-isoaspartyl/D-aspartyl protein methyltransferase family.</text>
</comment>